<gene>
    <name evidence="2" type="primary">rpsL</name>
    <name type="ordered locus">BSUIS_A1287</name>
</gene>
<sequence length="123" mass="13871">MPTVNQLIRKPRTAPVKRNKVPALQANPQKRGVCTRVYTTTPKKPNSALRKVAKVRLTNGFEVIGYIPGEGHNLQEHSVVMIRGGRVKDLPGVRYHIIRGVLDTQGVKNRKQRRSKYGAKRPK</sequence>
<accession>B0CH37</accession>
<proteinExistence type="inferred from homology"/>
<keyword id="KW-0488">Methylation</keyword>
<keyword id="KW-0687">Ribonucleoprotein</keyword>
<keyword id="KW-0689">Ribosomal protein</keyword>
<keyword id="KW-0694">RNA-binding</keyword>
<keyword id="KW-0699">rRNA-binding</keyword>
<keyword id="KW-0820">tRNA-binding</keyword>
<comment type="function">
    <text evidence="2">With S4 and S5 plays an important role in translational accuracy.</text>
</comment>
<comment type="function">
    <text evidence="2">Interacts with and stabilizes bases of the 16S rRNA that are involved in tRNA selection in the A site and with the mRNA backbone. Located at the interface of the 30S and 50S subunits, it traverses the body of the 30S subunit contacting proteins on the other side and probably holding the rRNA structure together. The combined cluster of proteins S8, S12 and S17 appears to hold together the shoulder and platform of the 30S subunit.</text>
</comment>
<comment type="subunit">
    <text evidence="2">Part of the 30S ribosomal subunit. Contacts proteins S8 and S17. May interact with IF1 in the 30S initiation complex.</text>
</comment>
<comment type="similarity">
    <text evidence="2">Belongs to the universal ribosomal protein uS12 family.</text>
</comment>
<evidence type="ECO:0000250" key="1"/>
<evidence type="ECO:0000255" key="2">
    <source>
        <dbReference type="HAMAP-Rule" id="MF_00403"/>
    </source>
</evidence>
<evidence type="ECO:0000305" key="3"/>
<protein>
    <recommendedName>
        <fullName evidence="2">Small ribosomal subunit protein uS12</fullName>
    </recommendedName>
    <alternativeName>
        <fullName evidence="3">30S ribosomal protein S12</fullName>
    </alternativeName>
</protein>
<dbReference type="EMBL" id="CP000911">
    <property type="protein sequence ID" value="ABY38338.1"/>
    <property type="molecule type" value="Genomic_DNA"/>
</dbReference>
<dbReference type="RefSeq" id="WP_002964366.1">
    <property type="nucleotide sequence ID" value="NC_010169.1"/>
</dbReference>
<dbReference type="SMR" id="B0CH37"/>
<dbReference type="GeneID" id="93016435"/>
<dbReference type="KEGG" id="bmt:BSUIS_A1287"/>
<dbReference type="HOGENOM" id="CLU_104295_1_2_5"/>
<dbReference type="PRO" id="PR:B0CH37"/>
<dbReference type="Proteomes" id="UP000008545">
    <property type="component" value="Chromosome I"/>
</dbReference>
<dbReference type="GO" id="GO:0015935">
    <property type="term" value="C:small ribosomal subunit"/>
    <property type="evidence" value="ECO:0007669"/>
    <property type="project" value="InterPro"/>
</dbReference>
<dbReference type="GO" id="GO:0019843">
    <property type="term" value="F:rRNA binding"/>
    <property type="evidence" value="ECO:0007669"/>
    <property type="project" value="UniProtKB-UniRule"/>
</dbReference>
<dbReference type="GO" id="GO:0003735">
    <property type="term" value="F:structural constituent of ribosome"/>
    <property type="evidence" value="ECO:0007669"/>
    <property type="project" value="InterPro"/>
</dbReference>
<dbReference type="GO" id="GO:0000049">
    <property type="term" value="F:tRNA binding"/>
    <property type="evidence" value="ECO:0007669"/>
    <property type="project" value="UniProtKB-UniRule"/>
</dbReference>
<dbReference type="GO" id="GO:0006412">
    <property type="term" value="P:translation"/>
    <property type="evidence" value="ECO:0007669"/>
    <property type="project" value="UniProtKB-UniRule"/>
</dbReference>
<dbReference type="CDD" id="cd03368">
    <property type="entry name" value="Ribosomal_S12"/>
    <property type="match status" value="1"/>
</dbReference>
<dbReference type="FunFam" id="2.40.50.140:FF:000001">
    <property type="entry name" value="30S ribosomal protein S12"/>
    <property type="match status" value="1"/>
</dbReference>
<dbReference type="Gene3D" id="2.40.50.140">
    <property type="entry name" value="Nucleic acid-binding proteins"/>
    <property type="match status" value="1"/>
</dbReference>
<dbReference type="HAMAP" id="MF_00403_B">
    <property type="entry name" value="Ribosomal_uS12_B"/>
    <property type="match status" value="1"/>
</dbReference>
<dbReference type="InterPro" id="IPR012340">
    <property type="entry name" value="NA-bd_OB-fold"/>
</dbReference>
<dbReference type="InterPro" id="IPR006032">
    <property type="entry name" value="Ribosomal_uS12"/>
</dbReference>
<dbReference type="InterPro" id="IPR005679">
    <property type="entry name" value="Ribosomal_uS12_bac"/>
</dbReference>
<dbReference type="NCBIfam" id="TIGR00981">
    <property type="entry name" value="rpsL_bact"/>
    <property type="match status" value="1"/>
</dbReference>
<dbReference type="PANTHER" id="PTHR11652">
    <property type="entry name" value="30S RIBOSOMAL PROTEIN S12 FAMILY MEMBER"/>
    <property type="match status" value="1"/>
</dbReference>
<dbReference type="Pfam" id="PF00164">
    <property type="entry name" value="Ribosom_S12_S23"/>
    <property type="match status" value="1"/>
</dbReference>
<dbReference type="PIRSF" id="PIRSF002133">
    <property type="entry name" value="Ribosomal_S12/S23"/>
    <property type="match status" value="1"/>
</dbReference>
<dbReference type="PRINTS" id="PR01034">
    <property type="entry name" value="RIBOSOMALS12"/>
</dbReference>
<dbReference type="SUPFAM" id="SSF50249">
    <property type="entry name" value="Nucleic acid-binding proteins"/>
    <property type="match status" value="1"/>
</dbReference>
<dbReference type="PROSITE" id="PS00055">
    <property type="entry name" value="RIBOSOMAL_S12"/>
    <property type="match status" value="1"/>
</dbReference>
<organism>
    <name type="scientific">Brucella suis (strain ATCC 23445 / NCTC 10510)</name>
    <dbReference type="NCBI Taxonomy" id="470137"/>
    <lineage>
        <taxon>Bacteria</taxon>
        <taxon>Pseudomonadati</taxon>
        <taxon>Pseudomonadota</taxon>
        <taxon>Alphaproteobacteria</taxon>
        <taxon>Hyphomicrobiales</taxon>
        <taxon>Brucellaceae</taxon>
        <taxon>Brucella/Ochrobactrum group</taxon>
        <taxon>Brucella</taxon>
    </lineage>
</organism>
<feature type="chain" id="PRO_1000080384" description="Small ribosomal subunit protein uS12">
    <location>
        <begin position="1"/>
        <end position="123"/>
    </location>
</feature>
<feature type="modified residue" description="3-methylthioaspartic acid" evidence="1">
    <location>
        <position position="89"/>
    </location>
</feature>
<name>RS12_BRUSI</name>
<reference key="1">
    <citation type="submission" date="2007-12" db="EMBL/GenBank/DDBJ databases">
        <title>Brucella suis ATCC 23445 whole genome shotgun sequencing project.</title>
        <authorList>
            <person name="Setubal J.C."/>
            <person name="Bowns C."/>
            <person name="Boyle S."/>
            <person name="Crasta O.R."/>
            <person name="Czar M.J."/>
            <person name="Dharmanolla C."/>
            <person name="Gillespie J.J."/>
            <person name="Kenyon R.W."/>
            <person name="Lu J."/>
            <person name="Mane S."/>
            <person name="Mohapatra S."/>
            <person name="Nagrani S."/>
            <person name="Purkayastha A."/>
            <person name="Rajasimha H.K."/>
            <person name="Shallom J.M."/>
            <person name="Shallom S."/>
            <person name="Shukla M."/>
            <person name="Snyder E.E."/>
            <person name="Sobral B.W."/>
            <person name="Wattam A.R."/>
            <person name="Will R."/>
            <person name="Williams K."/>
            <person name="Yoo H."/>
            <person name="Bruce D."/>
            <person name="Detter C."/>
            <person name="Munk C."/>
            <person name="Brettin T.S."/>
        </authorList>
    </citation>
    <scope>NUCLEOTIDE SEQUENCE [LARGE SCALE GENOMIC DNA]</scope>
    <source>
        <strain>ATCC 23445 / NCTC 10510</strain>
    </source>
</reference>